<reference key="1">
    <citation type="submission" date="2007-05" db="EMBL/GenBank/DDBJ databases">
        <title>Complete sequence of chromosome of Psychrobacter sp. PRwf-1.</title>
        <authorList>
            <consortium name="US DOE Joint Genome Institute"/>
            <person name="Copeland A."/>
            <person name="Lucas S."/>
            <person name="Lapidus A."/>
            <person name="Barry K."/>
            <person name="Detter J.C."/>
            <person name="Glavina del Rio T."/>
            <person name="Hammon N."/>
            <person name="Israni S."/>
            <person name="Dalin E."/>
            <person name="Tice H."/>
            <person name="Pitluck S."/>
            <person name="Chain P."/>
            <person name="Malfatti S."/>
            <person name="Shin M."/>
            <person name="Vergez L."/>
            <person name="Schmutz J."/>
            <person name="Larimer F."/>
            <person name="Land M."/>
            <person name="Hauser L."/>
            <person name="Kyrpides N."/>
            <person name="Kim E."/>
            <person name="Tiedje J."/>
            <person name="Richardson P."/>
        </authorList>
    </citation>
    <scope>NUCLEOTIDE SEQUENCE [LARGE SCALE GENOMIC DNA]</scope>
    <source>
        <strain>PRwf-1</strain>
    </source>
</reference>
<accession>A5WH15</accession>
<proteinExistence type="inferred from homology"/>
<keyword id="KW-0067">ATP-binding</keyword>
<keyword id="KW-0997">Cell inner membrane</keyword>
<keyword id="KW-1003">Cell membrane</keyword>
<keyword id="KW-0963">Cytoplasm</keyword>
<keyword id="KW-0472">Membrane</keyword>
<keyword id="KW-0479">Metal-binding</keyword>
<keyword id="KW-0547">Nucleotide-binding</keyword>
<keyword id="KW-0653">Protein transport</keyword>
<keyword id="KW-1278">Translocase</keyword>
<keyword id="KW-0811">Translocation</keyword>
<keyword id="KW-0813">Transport</keyword>
<keyword id="KW-0862">Zinc</keyword>
<evidence type="ECO:0000255" key="1">
    <source>
        <dbReference type="HAMAP-Rule" id="MF_01382"/>
    </source>
</evidence>
<dbReference type="EC" id="7.4.2.8" evidence="1"/>
<dbReference type="EMBL" id="CP000713">
    <property type="protein sequence ID" value="ABQ94956.1"/>
    <property type="molecule type" value="Genomic_DNA"/>
</dbReference>
<dbReference type="SMR" id="A5WH15"/>
<dbReference type="STRING" id="349106.PsycPRwf_2016"/>
<dbReference type="KEGG" id="prw:PsycPRwf_2016"/>
<dbReference type="eggNOG" id="COG0653">
    <property type="taxonomic scope" value="Bacteria"/>
</dbReference>
<dbReference type="HOGENOM" id="CLU_005314_3_0_6"/>
<dbReference type="GO" id="GO:0031522">
    <property type="term" value="C:cell envelope Sec protein transport complex"/>
    <property type="evidence" value="ECO:0007669"/>
    <property type="project" value="TreeGrafter"/>
</dbReference>
<dbReference type="GO" id="GO:0005829">
    <property type="term" value="C:cytosol"/>
    <property type="evidence" value="ECO:0007669"/>
    <property type="project" value="TreeGrafter"/>
</dbReference>
<dbReference type="GO" id="GO:0005886">
    <property type="term" value="C:plasma membrane"/>
    <property type="evidence" value="ECO:0007669"/>
    <property type="project" value="UniProtKB-SubCell"/>
</dbReference>
<dbReference type="GO" id="GO:0005524">
    <property type="term" value="F:ATP binding"/>
    <property type="evidence" value="ECO:0007669"/>
    <property type="project" value="UniProtKB-UniRule"/>
</dbReference>
<dbReference type="GO" id="GO:0046872">
    <property type="term" value="F:metal ion binding"/>
    <property type="evidence" value="ECO:0007669"/>
    <property type="project" value="UniProtKB-KW"/>
</dbReference>
<dbReference type="GO" id="GO:0008564">
    <property type="term" value="F:protein-exporting ATPase activity"/>
    <property type="evidence" value="ECO:0007669"/>
    <property type="project" value="UniProtKB-EC"/>
</dbReference>
<dbReference type="GO" id="GO:0065002">
    <property type="term" value="P:intracellular protein transmembrane transport"/>
    <property type="evidence" value="ECO:0007669"/>
    <property type="project" value="UniProtKB-UniRule"/>
</dbReference>
<dbReference type="GO" id="GO:0017038">
    <property type="term" value="P:protein import"/>
    <property type="evidence" value="ECO:0007669"/>
    <property type="project" value="InterPro"/>
</dbReference>
<dbReference type="GO" id="GO:0006605">
    <property type="term" value="P:protein targeting"/>
    <property type="evidence" value="ECO:0007669"/>
    <property type="project" value="UniProtKB-UniRule"/>
</dbReference>
<dbReference type="GO" id="GO:0043952">
    <property type="term" value="P:protein transport by the Sec complex"/>
    <property type="evidence" value="ECO:0007669"/>
    <property type="project" value="TreeGrafter"/>
</dbReference>
<dbReference type="CDD" id="cd17928">
    <property type="entry name" value="DEXDc_SecA"/>
    <property type="match status" value="1"/>
</dbReference>
<dbReference type="CDD" id="cd18803">
    <property type="entry name" value="SF2_C_secA"/>
    <property type="match status" value="1"/>
</dbReference>
<dbReference type="FunFam" id="3.40.50.300:FF:000113">
    <property type="entry name" value="Preprotein translocase subunit SecA"/>
    <property type="match status" value="1"/>
</dbReference>
<dbReference type="FunFam" id="3.90.1440.10:FF:000001">
    <property type="entry name" value="Preprotein translocase subunit SecA"/>
    <property type="match status" value="1"/>
</dbReference>
<dbReference type="FunFam" id="1.10.3060.10:FF:000003">
    <property type="entry name" value="Protein translocase subunit SecA"/>
    <property type="match status" value="1"/>
</dbReference>
<dbReference type="Gene3D" id="1.10.3060.10">
    <property type="entry name" value="Helical scaffold and wing domains of SecA"/>
    <property type="match status" value="1"/>
</dbReference>
<dbReference type="Gene3D" id="3.40.50.300">
    <property type="entry name" value="P-loop containing nucleotide triphosphate hydrolases"/>
    <property type="match status" value="2"/>
</dbReference>
<dbReference type="Gene3D" id="3.90.1440.10">
    <property type="entry name" value="SecA, preprotein cross-linking domain"/>
    <property type="match status" value="1"/>
</dbReference>
<dbReference type="HAMAP" id="MF_01382">
    <property type="entry name" value="SecA"/>
    <property type="match status" value="1"/>
</dbReference>
<dbReference type="InterPro" id="IPR014001">
    <property type="entry name" value="Helicase_ATP-bd"/>
</dbReference>
<dbReference type="InterPro" id="IPR001650">
    <property type="entry name" value="Helicase_C-like"/>
</dbReference>
<dbReference type="InterPro" id="IPR027417">
    <property type="entry name" value="P-loop_NTPase"/>
</dbReference>
<dbReference type="InterPro" id="IPR004027">
    <property type="entry name" value="SEC_C_motif"/>
</dbReference>
<dbReference type="InterPro" id="IPR000185">
    <property type="entry name" value="SecA"/>
</dbReference>
<dbReference type="InterPro" id="IPR020937">
    <property type="entry name" value="SecA_CS"/>
</dbReference>
<dbReference type="InterPro" id="IPR011115">
    <property type="entry name" value="SecA_DEAD"/>
</dbReference>
<dbReference type="InterPro" id="IPR014018">
    <property type="entry name" value="SecA_motor_DEAD"/>
</dbReference>
<dbReference type="InterPro" id="IPR011130">
    <property type="entry name" value="SecA_preprotein_X-link_dom"/>
</dbReference>
<dbReference type="InterPro" id="IPR044722">
    <property type="entry name" value="SecA_SF2_C"/>
</dbReference>
<dbReference type="InterPro" id="IPR011116">
    <property type="entry name" value="SecA_Wing/Scaffold"/>
</dbReference>
<dbReference type="InterPro" id="IPR036266">
    <property type="entry name" value="SecA_Wing/Scaffold_sf"/>
</dbReference>
<dbReference type="InterPro" id="IPR036670">
    <property type="entry name" value="SecA_X-link_sf"/>
</dbReference>
<dbReference type="NCBIfam" id="NF009538">
    <property type="entry name" value="PRK12904.1"/>
    <property type="match status" value="1"/>
</dbReference>
<dbReference type="NCBIfam" id="TIGR00963">
    <property type="entry name" value="secA"/>
    <property type="match status" value="1"/>
</dbReference>
<dbReference type="PANTHER" id="PTHR30612:SF0">
    <property type="entry name" value="CHLOROPLAST PROTEIN-TRANSPORTING ATPASE"/>
    <property type="match status" value="1"/>
</dbReference>
<dbReference type="PANTHER" id="PTHR30612">
    <property type="entry name" value="SECA INNER MEMBRANE COMPONENT OF SEC PROTEIN SECRETION SYSTEM"/>
    <property type="match status" value="1"/>
</dbReference>
<dbReference type="Pfam" id="PF21090">
    <property type="entry name" value="P-loop_SecA"/>
    <property type="match status" value="1"/>
</dbReference>
<dbReference type="Pfam" id="PF02810">
    <property type="entry name" value="SEC-C"/>
    <property type="match status" value="1"/>
</dbReference>
<dbReference type="Pfam" id="PF07517">
    <property type="entry name" value="SecA_DEAD"/>
    <property type="match status" value="1"/>
</dbReference>
<dbReference type="Pfam" id="PF01043">
    <property type="entry name" value="SecA_PP_bind"/>
    <property type="match status" value="1"/>
</dbReference>
<dbReference type="Pfam" id="PF07516">
    <property type="entry name" value="SecA_SW"/>
    <property type="match status" value="1"/>
</dbReference>
<dbReference type="PRINTS" id="PR00906">
    <property type="entry name" value="SECA"/>
</dbReference>
<dbReference type="SMART" id="SM00957">
    <property type="entry name" value="SecA_DEAD"/>
    <property type="match status" value="1"/>
</dbReference>
<dbReference type="SMART" id="SM00958">
    <property type="entry name" value="SecA_PP_bind"/>
    <property type="match status" value="1"/>
</dbReference>
<dbReference type="SUPFAM" id="SSF81886">
    <property type="entry name" value="Helical scaffold and wing domains of SecA"/>
    <property type="match status" value="1"/>
</dbReference>
<dbReference type="SUPFAM" id="SSF52540">
    <property type="entry name" value="P-loop containing nucleoside triphosphate hydrolases"/>
    <property type="match status" value="2"/>
</dbReference>
<dbReference type="SUPFAM" id="SSF81767">
    <property type="entry name" value="Pre-protein crosslinking domain of SecA"/>
    <property type="match status" value="1"/>
</dbReference>
<dbReference type="PROSITE" id="PS01312">
    <property type="entry name" value="SECA"/>
    <property type="match status" value="1"/>
</dbReference>
<dbReference type="PROSITE" id="PS51196">
    <property type="entry name" value="SECA_MOTOR_DEAD"/>
    <property type="match status" value="1"/>
</dbReference>
<sequence>MLSKIVGSVIGTKNDRELKRMRQIVAKVNAQEAAISALTDAQLRDKTAEFKSRFDEGASLDSLLPEAFAVCREASKRVLGMRHYDVQIIGGITLHEGKIAEMRTGEGKTLMATLAIYLNAISGKGVHVVTVNDYLAARDAELNRPLFDFLGLTVGVIYSQQPPYEKVAAYQSDITYGTNNEYGFDYLRDNMVFSLAEKKQRPLNYCIIDEIDSILIDEARTPLIISGQADDSSATYALINNIIPRLTRSTDEEANKENEDGDFWIDEKNRQIEISEKGYEKIESFLIEVGELGENESLYSPIRLPLLAHVQAAIRAHHIFIKNVHYIVDNGEVIIVDENTGRTMPGRRWSDGLHQAVEAKEGVEIQAENQTLATTTFQNYFRLYDKLSGMTGTADTEAAEFKSTYDIDVVVIPTHKPIARIDLEDQIFLTKLGKYKGIIREIKEIQAKGAPVLVGTATIEASEELSYLLDQEGIKHNVLNAKQHEREAEIIAQAGSPKAVTIATNMAGRGTDIILGGNWQAHISDPDNVSPEEMQRLKAAWQKKHDEVLAAGGLHIIGSERHESRRIDNQLRGRAGRQGDPGQSRFFLSLEDDLMRIFAGDRVVNMMRAMGLKEDEAIEHKMVSRSIENAQGKVESRDFDARKNLLKYDDIANEQRKVIYSQRDDLLAEADLKQAIEAMHRDVYDALISQFVPPGSIDDQWNIDGLEDELESEFKYYMPINDWLDSDRRLDEEGLREKIVQTAIARYRERRELMTPENAAQLERHFMLQSLDRHWKEHLTQMDQLRKGIHLRGYAQKDPQQEYKRESFELFQMMLGAIKSDTVQDLSRVHIPTREELEAMEAERLAQAERQQMMFEHDEVDSLTGERHSDPDVEARNLAAEQQATATKAPAAANGNNPYANMNISRNAPCPCGSGLRYKQCHGKI</sequence>
<name>SECA_PSYWF</name>
<organism>
    <name type="scientific">Psychrobacter sp. (strain PRwf-1)</name>
    <dbReference type="NCBI Taxonomy" id="349106"/>
    <lineage>
        <taxon>Bacteria</taxon>
        <taxon>Pseudomonadati</taxon>
        <taxon>Pseudomonadota</taxon>
        <taxon>Gammaproteobacteria</taxon>
        <taxon>Moraxellales</taxon>
        <taxon>Moraxellaceae</taxon>
        <taxon>Psychrobacter</taxon>
    </lineage>
</organism>
<gene>
    <name evidence="1" type="primary">secA</name>
    <name type="ordered locus">PsycPRwf_2016</name>
</gene>
<feature type="chain" id="PRO_0000320908" description="Protein translocase subunit SecA">
    <location>
        <begin position="1"/>
        <end position="925"/>
    </location>
</feature>
<feature type="binding site" evidence="1">
    <location>
        <position position="87"/>
    </location>
    <ligand>
        <name>ATP</name>
        <dbReference type="ChEBI" id="CHEBI:30616"/>
    </ligand>
</feature>
<feature type="binding site" evidence="1">
    <location>
        <begin position="105"/>
        <end position="109"/>
    </location>
    <ligand>
        <name>ATP</name>
        <dbReference type="ChEBI" id="CHEBI:30616"/>
    </ligand>
</feature>
<feature type="binding site" evidence="1">
    <location>
        <position position="512"/>
    </location>
    <ligand>
        <name>ATP</name>
        <dbReference type="ChEBI" id="CHEBI:30616"/>
    </ligand>
</feature>
<feature type="binding site" evidence="1">
    <location>
        <position position="910"/>
    </location>
    <ligand>
        <name>Zn(2+)</name>
        <dbReference type="ChEBI" id="CHEBI:29105"/>
    </ligand>
</feature>
<feature type="binding site" evidence="1">
    <location>
        <position position="912"/>
    </location>
    <ligand>
        <name>Zn(2+)</name>
        <dbReference type="ChEBI" id="CHEBI:29105"/>
    </ligand>
</feature>
<feature type="binding site" evidence="1">
    <location>
        <position position="921"/>
    </location>
    <ligand>
        <name>Zn(2+)</name>
        <dbReference type="ChEBI" id="CHEBI:29105"/>
    </ligand>
</feature>
<feature type="binding site" evidence="1">
    <location>
        <position position="922"/>
    </location>
    <ligand>
        <name>Zn(2+)</name>
        <dbReference type="ChEBI" id="CHEBI:29105"/>
    </ligand>
</feature>
<protein>
    <recommendedName>
        <fullName evidence="1">Protein translocase subunit SecA</fullName>
        <ecNumber evidence="1">7.4.2.8</ecNumber>
    </recommendedName>
</protein>
<comment type="function">
    <text evidence="1">Part of the Sec protein translocase complex. Interacts with the SecYEG preprotein conducting channel. Has a central role in coupling the hydrolysis of ATP to the transfer of proteins into and across the cell membrane, serving both as a receptor for the preprotein-SecB complex and as an ATP-driven molecular motor driving the stepwise translocation of polypeptide chains across the membrane.</text>
</comment>
<comment type="catalytic activity">
    <reaction evidence="1">
        <text>ATP + H2O + cellular proteinSide 1 = ADP + phosphate + cellular proteinSide 2.</text>
        <dbReference type="EC" id="7.4.2.8"/>
    </reaction>
</comment>
<comment type="cofactor">
    <cofactor evidence="1">
        <name>Zn(2+)</name>
        <dbReference type="ChEBI" id="CHEBI:29105"/>
    </cofactor>
    <text evidence="1">May bind 1 zinc ion per subunit.</text>
</comment>
<comment type="subunit">
    <text evidence="1">Monomer and homodimer. Part of the essential Sec protein translocation apparatus which comprises SecA, SecYEG and auxiliary proteins SecDF-YajC and YidC.</text>
</comment>
<comment type="subcellular location">
    <subcellularLocation>
        <location evidence="1">Cell inner membrane</location>
        <topology evidence="1">Peripheral membrane protein</topology>
        <orientation evidence="1">Cytoplasmic side</orientation>
    </subcellularLocation>
    <subcellularLocation>
        <location evidence="1">Cytoplasm</location>
    </subcellularLocation>
    <text evidence="1">Distribution is 50-50.</text>
</comment>
<comment type="similarity">
    <text evidence="1">Belongs to the SecA family.</text>
</comment>